<protein>
    <recommendedName>
        <fullName evidence="1">UDP-N-acetylglucosamine--N-acetylmuramyl-(pentapeptide) pyrophosphoryl-undecaprenol N-acetylglucosamine transferase</fullName>
        <ecNumber evidence="1">2.4.1.227</ecNumber>
    </recommendedName>
    <alternativeName>
        <fullName evidence="1">Undecaprenyl-PP-MurNAc-pentapeptide-UDPGlcNAc GlcNAc transferase</fullName>
    </alternativeName>
</protein>
<reference key="1">
    <citation type="journal article" date="2008" name="PLoS ONE">
        <title>Comparative analysis of Acinetobacters: three genomes for three lifestyles.</title>
        <authorList>
            <person name="Vallenet D."/>
            <person name="Nordmann P."/>
            <person name="Barbe V."/>
            <person name="Poirel L."/>
            <person name="Mangenot S."/>
            <person name="Bataille E."/>
            <person name="Dossat C."/>
            <person name="Gas S."/>
            <person name="Kreimeyer A."/>
            <person name="Lenoble P."/>
            <person name="Oztas S."/>
            <person name="Poulain J."/>
            <person name="Segurens B."/>
            <person name="Robert C."/>
            <person name="Abergel C."/>
            <person name="Claverie J.-M."/>
            <person name="Raoult D."/>
            <person name="Medigue C."/>
            <person name="Weissenbach J."/>
            <person name="Cruveiller S."/>
        </authorList>
    </citation>
    <scope>NUCLEOTIDE SEQUENCE [LARGE SCALE GENOMIC DNA]</scope>
    <source>
        <strain>SDF</strain>
    </source>
</reference>
<dbReference type="EC" id="2.4.1.227" evidence="1"/>
<dbReference type="EMBL" id="CU468230">
    <property type="protein sequence ID" value="CAP02735.1"/>
    <property type="molecule type" value="Genomic_DNA"/>
</dbReference>
<dbReference type="SMR" id="B0VNZ9"/>
<dbReference type="KEGG" id="abm:ABSDF3472"/>
<dbReference type="HOGENOM" id="CLU_037404_2_0_6"/>
<dbReference type="UniPathway" id="UPA00219"/>
<dbReference type="Proteomes" id="UP000001741">
    <property type="component" value="Chromosome"/>
</dbReference>
<dbReference type="GO" id="GO:0005886">
    <property type="term" value="C:plasma membrane"/>
    <property type="evidence" value="ECO:0007669"/>
    <property type="project" value="UniProtKB-SubCell"/>
</dbReference>
<dbReference type="GO" id="GO:0051991">
    <property type="term" value="F:UDP-N-acetyl-D-glucosamine:N-acetylmuramoyl-L-alanyl-D-glutamyl-meso-2,6-diaminopimelyl-D-alanyl-D-alanine-diphosphoundecaprenol 4-beta-N-acetylglucosaminlytransferase activity"/>
    <property type="evidence" value="ECO:0007669"/>
    <property type="project" value="RHEA"/>
</dbReference>
<dbReference type="GO" id="GO:0050511">
    <property type="term" value="F:undecaprenyldiphospho-muramoylpentapeptide beta-N-acetylglucosaminyltransferase activity"/>
    <property type="evidence" value="ECO:0007669"/>
    <property type="project" value="UniProtKB-UniRule"/>
</dbReference>
<dbReference type="GO" id="GO:0005975">
    <property type="term" value="P:carbohydrate metabolic process"/>
    <property type="evidence" value="ECO:0007669"/>
    <property type="project" value="InterPro"/>
</dbReference>
<dbReference type="GO" id="GO:0051301">
    <property type="term" value="P:cell division"/>
    <property type="evidence" value="ECO:0007669"/>
    <property type="project" value="UniProtKB-KW"/>
</dbReference>
<dbReference type="GO" id="GO:0071555">
    <property type="term" value="P:cell wall organization"/>
    <property type="evidence" value="ECO:0007669"/>
    <property type="project" value="UniProtKB-KW"/>
</dbReference>
<dbReference type="GO" id="GO:0030259">
    <property type="term" value="P:lipid glycosylation"/>
    <property type="evidence" value="ECO:0007669"/>
    <property type="project" value="UniProtKB-UniRule"/>
</dbReference>
<dbReference type="GO" id="GO:0009252">
    <property type="term" value="P:peptidoglycan biosynthetic process"/>
    <property type="evidence" value="ECO:0007669"/>
    <property type="project" value="UniProtKB-UniRule"/>
</dbReference>
<dbReference type="GO" id="GO:0008360">
    <property type="term" value="P:regulation of cell shape"/>
    <property type="evidence" value="ECO:0007669"/>
    <property type="project" value="UniProtKB-KW"/>
</dbReference>
<dbReference type="CDD" id="cd03785">
    <property type="entry name" value="GT28_MurG"/>
    <property type="match status" value="1"/>
</dbReference>
<dbReference type="Gene3D" id="3.40.50.2000">
    <property type="entry name" value="Glycogen Phosphorylase B"/>
    <property type="match status" value="2"/>
</dbReference>
<dbReference type="HAMAP" id="MF_00033">
    <property type="entry name" value="MurG"/>
    <property type="match status" value="1"/>
</dbReference>
<dbReference type="InterPro" id="IPR006009">
    <property type="entry name" value="GlcNAc_MurG"/>
</dbReference>
<dbReference type="InterPro" id="IPR007235">
    <property type="entry name" value="Glyco_trans_28_C"/>
</dbReference>
<dbReference type="InterPro" id="IPR004276">
    <property type="entry name" value="GlycoTrans_28_N"/>
</dbReference>
<dbReference type="NCBIfam" id="TIGR01133">
    <property type="entry name" value="murG"/>
    <property type="match status" value="1"/>
</dbReference>
<dbReference type="PANTHER" id="PTHR21015:SF22">
    <property type="entry name" value="GLYCOSYLTRANSFERASE"/>
    <property type="match status" value="1"/>
</dbReference>
<dbReference type="PANTHER" id="PTHR21015">
    <property type="entry name" value="UDP-N-ACETYLGLUCOSAMINE--N-ACETYLMURAMYL-(PENTAPEPTIDE) PYROPHOSPHORYL-UNDECAPRENOL N-ACETYLGLUCOSAMINE TRANSFERASE 1"/>
    <property type="match status" value="1"/>
</dbReference>
<dbReference type="Pfam" id="PF04101">
    <property type="entry name" value="Glyco_tran_28_C"/>
    <property type="match status" value="1"/>
</dbReference>
<dbReference type="Pfam" id="PF03033">
    <property type="entry name" value="Glyco_transf_28"/>
    <property type="match status" value="1"/>
</dbReference>
<dbReference type="SUPFAM" id="SSF53756">
    <property type="entry name" value="UDP-Glycosyltransferase/glycogen phosphorylase"/>
    <property type="match status" value="1"/>
</dbReference>
<keyword id="KW-0131">Cell cycle</keyword>
<keyword id="KW-0132">Cell division</keyword>
<keyword id="KW-0997">Cell inner membrane</keyword>
<keyword id="KW-1003">Cell membrane</keyword>
<keyword id="KW-0133">Cell shape</keyword>
<keyword id="KW-0961">Cell wall biogenesis/degradation</keyword>
<keyword id="KW-0328">Glycosyltransferase</keyword>
<keyword id="KW-0472">Membrane</keyword>
<keyword id="KW-0573">Peptidoglycan synthesis</keyword>
<keyword id="KW-0808">Transferase</keyword>
<comment type="function">
    <text evidence="1">Cell wall formation. Catalyzes the transfer of a GlcNAc subunit on undecaprenyl-pyrophosphoryl-MurNAc-pentapeptide (lipid intermediate I) to form undecaprenyl-pyrophosphoryl-MurNAc-(pentapeptide)GlcNAc (lipid intermediate II).</text>
</comment>
<comment type="catalytic activity">
    <reaction evidence="1">
        <text>di-trans,octa-cis-undecaprenyl diphospho-N-acetyl-alpha-D-muramoyl-L-alanyl-D-glutamyl-meso-2,6-diaminopimeloyl-D-alanyl-D-alanine + UDP-N-acetyl-alpha-D-glucosamine = di-trans,octa-cis-undecaprenyl diphospho-[N-acetyl-alpha-D-glucosaminyl-(1-&gt;4)]-N-acetyl-alpha-D-muramoyl-L-alanyl-D-glutamyl-meso-2,6-diaminopimeloyl-D-alanyl-D-alanine + UDP + H(+)</text>
        <dbReference type="Rhea" id="RHEA:31227"/>
        <dbReference type="ChEBI" id="CHEBI:15378"/>
        <dbReference type="ChEBI" id="CHEBI:57705"/>
        <dbReference type="ChEBI" id="CHEBI:58223"/>
        <dbReference type="ChEBI" id="CHEBI:61387"/>
        <dbReference type="ChEBI" id="CHEBI:61388"/>
        <dbReference type="EC" id="2.4.1.227"/>
    </reaction>
</comment>
<comment type="pathway">
    <text evidence="1">Cell wall biogenesis; peptidoglycan biosynthesis.</text>
</comment>
<comment type="subcellular location">
    <subcellularLocation>
        <location evidence="1">Cell inner membrane</location>
        <topology evidence="1">Peripheral membrane protein</topology>
        <orientation evidence="1">Cytoplasmic side</orientation>
    </subcellularLocation>
</comment>
<comment type="similarity">
    <text evidence="1">Belongs to the glycosyltransferase 28 family. MurG subfamily.</text>
</comment>
<organism>
    <name type="scientific">Acinetobacter baumannii (strain SDF)</name>
    <dbReference type="NCBI Taxonomy" id="509170"/>
    <lineage>
        <taxon>Bacteria</taxon>
        <taxon>Pseudomonadati</taxon>
        <taxon>Pseudomonadota</taxon>
        <taxon>Gammaproteobacteria</taxon>
        <taxon>Moraxellales</taxon>
        <taxon>Moraxellaceae</taxon>
        <taxon>Acinetobacter</taxon>
        <taxon>Acinetobacter calcoaceticus/baumannii complex</taxon>
    </lineage>
</organism>
<feature type="chain" id="PRO_1000090398" description="UDP-N-acetylglucosamine--N-acetylmuramyl-(pentapeptide) pyrophosphoryl-undecaprenol N-acetylglucosamine transferase">
    <location>
        <begin position="1"/>
        <end position="365"/>
    </location>
</feature>
<feature type="binding site" evidence="1">
    <location>
        <begin position="19"/>
        <end position="21"/>
    </location>
    <ligand>
        <name>UDP-N-acetyl-alpha-D-glucosamine</name>
        <dbReference type="ChEBI" id="CHEBI:57705"/>
    </ligand>
</feature>
<feature type="binding site" evidence="1">
    <location>
        <position position="131"/>
    </location>
    <ligand>
        <name>UDP-N-acetyl-alpha-D-glucosamine</name>
        <dbReference type="ChEBI" id="CHEBI:57705"/>
    </ligand>
</feature>
<feature type="binding site" evidence="1">
    <location>
        <position position="170"/>
    </location>
    <ligand>
        <name>UDP-N-acetyl-alpha-D-glucosamine</name>
        <dbReference type="ChEBI" id="CHEBI:57705"/>
    </ligand>
</feature>
<feature type="binding site" evidence="1">
    <location>
        <position position="201"/>
    </location>
    <ligand>
        <name>UDP-N-acetyl-alpha-D-glucosamine</name>
        <dbReference type="ChEBI" id="CHEBI:57705"/>
    </ligand>
</feature>
<feature type="binding site" evidence="1">
    <location>
        <position position="255"/>
    </location>
    <ligand>
        <name>UDP-N-acetyl-alpha-D-glucosamine</name>
        <dbReference type="ChEBI" id="CHEBI:57705"/>
    </ligand>
</feature>
<feature type="binding site" evidence="1">
    <location>
        <begin position="274"/>
        <end position="279"/>
    </location>
    <ligand>
        <name>UDP-N-acetyl-alpha-D-glucosamine</name>
        <dbReference type="ChEBI" id="CHEBI:57705"/>
    </ligand>
</feature>
<feature type="binding site" evidence="1">
    <location>
        <position position="300"/>
    </location>
    <ligand>
        <name>UDP-N-acetyl-alpha-D-glucosamine</name>
        <dbReference type="ChEBI" id="CHEBI:57705"/>
    </ligand>
</feature>
<name>MURG_ACIBS</name>
<gene>
    <name evidence="1" type="primary">murG</name>
    <name type="ordered locus">ABSDF3472</name>
</gene>
<accession>B0VNZ9</accession>
<proteinExistence type="inferred from homology"/>
<sequence length="365" mass="39303">MTDSQQSKPKHVMMMAAGTGGHVFPALAVAKQLQQQGCQVSWLATPIGMENRLLKDQNIPIYQIDIQGVRGNGVIRKLAAPFKILKATFSAMRYMKQLKVDAVAGFGGYVAGPGGLAARLLGIPVLIHEQNAVAGFTNAQLSRVAKVVCEAFPNTFPASEKVVTTGNPVRREITDILSPKWRYDEREQAGKPLNILIVGGSLGAKALNERLPPALKQLQVPLNIFHQCGQQQVEATQALYADAPANLTVQVLPFIEDMAKAYSEADLIICRAGALTVTEVATAGVAAVFVPLPIAVDDHQTANAKFLADVGAAKICQQSTMTPEVLNQLFTTLMNRQLLTEMAVKARQHAQPNATQHVVGLIQKM</sequence>
<evidence type="ECO:0000255" key="1">
    <source>
        <dbReference type="HAMAP-Rule" id="MF_00033"/>
    </source>
</evidence>